<feature type="chain" id="PRO_0000288968" description="Organic hydroperoxide resistance protein-like 2">
    <location>
        <begin position="1"/>
        <end position="142"/>
    </location>
</feature>
<reference key="1">
    <citation type="journal article" date="2005" name="Proc. Natl. Acad. Sci. U.S.A.">
        <title>Whole genome sequence of Staphylococcus saprophyticus reveals the pathogenesis of uncomplicated urinary tract infection.</title>
        <authorList>
            <person name="Kuroda M."/>
            <person name="Yamashita A."/>
            <person name="Hirakawa H."/>
            <person name="Kumano M."/>
            <person name="Morikawa K."/>
            <person name="Higashide M."/>
            <person name="Maruyama A."/>
            <person name="Inose Y."/>
            <person name="Matoba K."/>
            <person name="Toh H."/>
            <person name="Kuhara S."/>
            <person name="Hattori M."/>
            <person name="Ohta T."/>
        </authorList>
    </citation>
    <scope>NUCLEOTIDE SEQUENCE [LARGE SCALE GENOMIC DNA]</scope>
    <source>
        <strain>ATCC 15305 / DSM 20229 / NCIMB 8711 / NCTC 7292 / S-41</strain>
    </source>
</reference>
<comment type="similarity">
    <text evidence="1">Belongs to the OsmC/Ohr family.</text>
</comment>
<organism>
    <name type="scientific">Staphylococcus saprophyticus subsp. saprophyticus (strain ATCC 15305 / DSM 20229 / NCIMB 8711 / NCTC 7292 / S-41)</name>
    <dbReference type="NCBI Taxonomy" id="342451"/>
    <lineage>
        <taxon>Bacteria</taxon>
        <taxon>Bacillati</taxon>
        <taxon>Bacillota</taxon>
        <taxon>Bacilli</taxon>
        <taxon>Bacillales</taxon>
        <taxon>Staphylococcaceae</taxon>
        <taxon>Staphylococcus</taxon>
    </lineage>
</organism>
<protein>
    <recommendedName>
        <fullName>Organic hydroperoxide resistance protein-like 2</fullName>
    </recommendedName>
</protein>
<accession>Q49WG0</accession>
<sequence length="142" mass="15532">MVKPLYETKVISNGGRDGKVFSEDNTFYQDLAVPKEMGGNGVTESNPEQLFAAGYSACFNNALMHILKSDSKGTIEPEVSVTAYLLPDKNDGGVKLAAELDVTLTDMTQEEAETYVEKAHNYCPYSKALKESIDIEIQVSVN</sequence>
<gene>
    <name type="ordered locus">SSP1754</name>
</gene>
<evidence type="ECO:0000305" key="1"/>
<proteinExistence type="inferred from homology"/>
<name>OHRL2_STAS1</name>
<dbReference type="EMBL" id="AP008934">
    <property type="protein sequence ID" value="BAE18899.1"/>
    <property type="molecule type" value="Genomic_DNA"/>
</dbReference>
<dbReference type="RefSeq" id="WP_002483731.1">
    <property type="nucleotide sequence ID" value="NZ_MTGA01000039.1"/>
</dbReference>
<dbReference type="SMR" id="Q49WG0"/>
<dbReference type="KEGG" id="ssp:SSP1754"/>
<dbReference type="eggNOG" id="COG1764">
    <property type="taxonomic scope" value="Bacteria"/>
</dbReference>
<dbReference type="HOGENOM" id="CLU_106355_2_1_9"/>
<dbReference type="OrthoDB" id="9797508at2"/>
<dbReference type="Proteomes" id="UP000006371">
    <property type="component" value="Chromosome"/>
</dbReference>
<dbReference type="GO" id="GO:0006979">
    <property type="term" value="P:response to oxidative stress"/>
    <property type="evidence" value="ECO:0007669"/>
    <property type="project" value="InterPro"/>
</dbReference>
<dbReference type="Gene3D" id="2.20.25.10">
    <property type="match status" value="1"/>
</dbReference>
<dbReference type="Gene3D" id="3.30.300.20">
    <property type="match status" value="1"/>
</dbReference>
<dbReference type="InterPro" id="IPR015946">
    <property type="entry name" value="KH_dom-like_a/b"/>
</dbReference>
<dbReference type="InterPro" id="IPR019953">
    <property type="entry name" value="OHR"/>
</dbReference>
<dbReference type="InterPro" id="IPR003718">
    <property type="entry name" value="OsmC/Ohr_fam"/>
</dbReference>
<dbReference type="InterPro" id="IPR036102">
    <property type="entry name" value="OsmC/Ohrsf"/>
</dbReference>
<dbReference type="NCBIfam" id="TIGR03561">
    <property type="entry name" value="organ_hyd_perox"/>
    <property type="match status" value="1"/>
</dbReference>
<dbReference type="PANTHER" id="PTHR33797">
    <property type="entry name" value="ORGANIC HYDROPEROXIDE RESISTANCE PROTEIN-LIKE"/>
    <property type="match status" value="1"/>
</dbReference>
<dbReference type="PANTHER" id="PTHR33797:SF2">
    <property type="entry name" value="ORGANIC HYDROPEROXIDE RESISTANCE PROTEIN-LIKE"/>
    <property type="match status" value="1"/>
</dbReference>
<dbReference type="Pfam" id="PF02566">
    <property type="entry name" value="OsmC"/>
    <property type="match status" value="1"/>
</dbReference>
<dbReference type="SUPFAM" id="SSF82784">
    <property type="entry name" value="OsmC-like"/>
    <property type="match status" value="1"/>
</dbReference>
<keyword id="KW-1185">Reference proteome</keyword>